<name>Y273_UREP2</name>
<sequence length="109" mass="12223">MNFSSFIFKVSDVFKSVIHEASDVVTKADLDNANAHTHSLAVGLGIGIVLFLIAGLIIGYFISMKIMKRQLKKNPPISKDTIRMIYQQVGRKPSESQINEIYNRAVKQK</sequence>
<feature type="chain" id="PRO_1000079573" description="UPF0154 protein UPA3_0273">
    <location>
        <begin position="1"/>
        <end position="109"/>
    </location>
</feature>
<feature type="transmembrane region" description="Helical" evidence="1">
    <location>
        <begin position="42"/>
        <end position="62"/>
    </location>
</feature>
<gene>
    <name type="ordered locus">UPA3_0273</name>
</gene>
<comment type="subcellular location">
    <subcellularLocation>
        <location evidence="1">Cell membrane</location>
        <topology evidence="1">Single-pass membrane protein</topology>
    </subcellularLocation>
</comment>
<comment type="similarity">
    <text evidence="1">Belongs to the UPF0154 family.</text>
</comment>
<proteinExistence type="inferred from homology"/>
<dbReference type="EMBL" id="CP000942">
    <property type="protein sequence ID" value="ACA32880.1"/>
    <property type="molecule type" value="Genomic_DNA"/>
</dbReference>
<dbReference type="RefSeq" id="WP_010891717.1">
    <property type="nucleotide sequence ID" value="NC_010503.1"/>
</dbReference>
<dbReference type="SMR" id="B1AIQ4"/>
<dbReference type="GeneID" id="29672526"/>
<dbReference type="KEGG" id="upa:UPA3_0273"/>
<dbReference type="PATRIC" id="fig|273119.6.peg.274"/>
<dbReference type="HOGENOM" id="CLU_2182819_0_0_14"/>
<dbReference type="Proteomes" id="UP000002162">
    <property type="component" value="Chromosome"/>
</dbReference>
<dbReference type="GO" id="GO:0005886">
    <property type="term" value="C:plasma membrane"/>
    <property type="evidence" value="ECO:0007669"/>
    <property type="project" value="UniProtKB-SubCell"/>
</dbReference>
<dbReference type="HAMAP" id="MF_00363">
    <property type="entry name" value="UPF0154"/>
    <property type="match status" value="1"/>
</dbReference>
<dbReference type="InterPro" id="IPR005359">
    <property type="entry name" value="UPF0154"/>
</dbReference>
<dbReference type="Pfam" id="PF03672">
    <property type="entry name" value="UPF0154"/>
    <property type="match status" value="1"/>
</dbReference>
<reference key="1">
    <citation type="submission" date="2008-02" db="EMBL/GenBank/DDBJ databases">
        <title>Genome sequence of Ureaplasma parvum serovar 3.</title>
        <authorList>
            <person name="Methe B.A."/>
            <person name="Glass J."/>
            <person name="Waites K."/>
            <person name="Shrivastava S."/>
        </authorList>
    </citation>
    <scope>NUCLEOTIDE SEQUENCE [LARGE SCALE GENOMIC DNA]</scope>
    <source>
        <strain>ATCC 27815 / 27 / NCTC 11736</strain>
    </source>
</reference>
<accession>B1AIQ4</accession>
<organism>
    <name type="scientific">Ureaplasma parvum serovar 3 (strain ATCC 27815 / 27 / NCTC 11736)</name>
    <dbReference type="NCBI Taxonomy" id="505682"/>
    <lineage>
        <taxon>Bacteria</taxon>
        <taxon>Bacillati</taxon>
        <taxon>Mycoplasmatota</taxon>
        <taxon>Mycoplasmoidales</taxon>
        <taxon>Mycoplasmoidaceae</taxon>
        <taxon>Ureaplasma</taxon>
    </lineage>
</organism>
<keyword id="KW-1003">Cell membrane</keyword>
<keyword id="KW-0472">Membrane</keyword>
<keyword id="KW-0812">Transmembrane</keyword>
<keyword id="KW-1133">Transmembrane helix</keyword>
<protein>
    <recommendedName>
        <fullName evidence="1">UPF0154 protein UPA3_0273</fullName>
    </recommendedName>
</protein>
<evidence type="ECO:0000255" key="1">
    <source>
        <dbReference type="HAMAP-Rule" id="MF_00363"/>
    </source>
</evidence>